<sequence>MLKKSIGIFYRCFYLNNKCDYYLIFLAPFSLFTQIFMVITALISVANSGQMSLIWFTNFDTFTYQSNSLAIFLVWYYFLNHKSRWFENSSLVLSVTGYLVFTVIFFNFYALSRFTGIVNIEPDVQGWFSTITTQLPYSFNGSFINDWNAFSELLLHVIHPLFYFIYVGLLFKTYKFIKPPRNLQSFLLKAGIYPSIYAFYLQTIPFLNVWDNGENSYSVYGFFTQTKYNSYVWIWSIPIFASMFLILWMLFVINNHYYGKKHHK</sequence>
<gene>
    <name type="ordered locus">MG133</name>
</gene>
<protein>
    <recommendedName>
        <fullName>Uncharacterized protein MG133</fullName>
    </recommendedName>
</protein>
<feature type="chain" id="PRO_0000210434" description="Uncharacterized protein MG133">
    <location>
        <begin position="1"/>
        <end position="264"/>
    </location>
</feature>
<feature type="transmembrane region" description="Helical" evidence="1">
    <location>
        <begin position="23"/>
        <end position="43"/>
    </location>
</feature>
<feature type="transmembrane region" description="Helical" evidence="1">
    <location>
        <begin position="59"/>
        <end position="79"/>
    </location>
</feature>
<feature type="transmembrane region" description="Helical" evidence="1">
    <location>
        <begin position="91"/>
        <end position="111"/>
    </location>
</feature>
<feature type="transmembrane region" description="Helical" evidence="1">
    <location>
        <begin position="150"/>
        <end position="170"/>
    </location>
</feature>
<feature type="transmembrane region" description="Helical" evidence="1">
    <location>
        <begin position="190"/>
        <end position="210"/>
    </location>
</feature>
<feature type="transmembrane region" description="Helical" evidence="1">
    <location>
        <begin position="233"/>
        <end position="253"/>
    </location>
</feature>
<feature type="sequence conflict" description="In Ref. 2; CAA43749." evidence="3" ref="2">
    <original>IPIFASM</original>
    <variation>SLFLHQC</variation>
    <location>
        <begin position="237"/>
        <end position="243"/>
    </location>
</feature>
<name>Y133_MYCGE</name>
<keyword id="KW-1003">Cell membrane</keyword>
<keyword id="KW-0472">Membrane</keyword>
<keyword id="KW-1185">Reference proteome</keyword>
<keyword id="KW-0812">Transmembrane</keyword>
<keyword id="KW-1133">Transmembrane helix</keyword>
<reference key="1">
    <citation type="journal article" date="1995" name="Science">
        <title>The minimal gene complement of Mycoplasma genitalium.</title>
        <authorList>
            <person name="Fraser C.M."/>
            <person name="Gocayne J.D."/>
            <person name="White O."/>
            <person name="Adams M.D."/>
            <person name="Clayton R.A."/>
            <person name="Fleischmann R.D."/>
            <person name="Bult C.J."/>
            <person name="Kerlavage A.R."/>
            <person name="Sutton G.G."/>
            <person name="Kelley J.M."/>
            <person name="Fritchman J.L."/>
            <person name="Weidman J.F."/>
            <person name="Small K.V."/>
            <person name="Sandusky M."/>
            <person name="Fuhrmann J.L."/>
            <person name="Nguyen D.T."/>
            <person name="Utterback T.R."/>
            <person name="Saudek D.M."/>
            <person name="Phillips C.A."/>
            <person name="Merrick J.M."/>
            <person name="Tomb J.-F."/>
            <person name="Dougherty B.A."/>
            <person name="Bott K.F."/>
            <person name="Hu P.-C."/>
            <person name="Lucier T.S."/>
            <person name="Peterson S.N."/>
            <person name="Smith H.O."/>
            <person name="Hutchison C.A. III"/>
            <person name="Venter J.C."/>
        </authorList>
    </citation>
    <scope>NUCLEOTIDE SEQUENCE [LARGE SCALE GENOMIC DNA]</scope>
    <source>
        <strain>ATCC 33530 / DSM 19775 / NCTC 10195 / G37</strain>
    </source>
</reference>
<reference key="2">
    <citation type="journal article" date="1991" name="Nucleic Acids Res.">
        <title>A random sequencing approach for placing markers on the physical map of Mycoplasma genitalium.</title>
        <authorList>
            <person name="Peterson S.N."/>
            <person name="Schramm N."/>
            <person name="Hu P.-C."/>
            <person name="Bott K.F."/>
            <person name="Hutchison C.A. III"/>
        </authorList>
    </citation>
    <scope>NUCLEOTIDE SEQUENCE [GENOMIC DNA] OF 182-244</scope>
    <source>
        <strain>ATCC 33530 / DSM 19775 / NCTC 10195 / G37</strain>
    </source>
</reference>
<reference key="3">
    <citation type="journal article" date="2006" name="Proc. Natl. Acad. Sci. U.S.A.">
        <title>Essential genes of a minimal bacterium.</title>
        <authorList>
            <person name="Glass J.I."/>
            <person name="Assad-Garcia N."/>
            <person name="Alperovich N."/>
            <person name="Yooseph S."/>
            <person name="Lewis M.R."/>
            <person name="Maruf M."/>
            <person name="Hutchison C.A. III"/>
            <person name="Smith H.O."/>
            <person name="Venter J.C."/>
        </authorList>
    </citation>
    <scope>SEQUENCE REVISION</scope>
    <scope>DISRUPTION PHENOTYPE</scope>
    <source>
        <strain>ATCC 33530 / DSM 19775 / NCTC 10195 / G37</strain>
    </source>
</reference>
<organism>
    <name type="scientific">Mycoplasma genitalium (strain ATCC 33530 / DSM 19775 / NCTC 10195 / G37)</name>
    <name type="common">Mycoplasmoides genitalium</name>
    <dbReference type="NCBI Taxonomy" id="243273"/>
    <lineage>
        <taxon>Bacteria</taxon>
        <taxon>Bacillati</taxon>
        <taxon>Mycoplasmatota</taxon>
        <taxon>Mycoplasmoidales</taxon>
        <taxon>Mycoplasmoidaceae</taxon>
        <taxon>Mycoplasmoides</taxon>
    </lineage>
</organism>
<accession>P47379</accession>
<accession>Q49489</accession>
<dbReference type="EMBL" id="L43967">
    <property type="protein sequence ID" value="AAC71350.2"/>
    <property type="molecule type" value="Genomic_DNA"/>
</dbReference>
<dbReference type="EMBL" id="X61537">
    <property type="protein sequence ID" value="CAA43749.1"/>
    <property type="molecule type" value="Genomic_DNA"/>
</dbReference>
<dbReference type="RefSeq" id="WP_009885689.1">
    <property type="nucleotide sequence ID" value="NC_000908.2"/>
</dbReference>
<dbReference type="STRING" id="243273.MG_133"/>
<dbReference type="GeneID" id="88282258"/>
<dbReference type="KEGG" id="mge:MG_133"/>
<dbReference type="eggNOG" id="ENOG5032G6H">
    <property type="taxonomic scope" value="Bacteria"/>
</dbReference>
<dbReference type="HOGENOM" id="CLU_1053017_0_0_14"/>
<dbReference type="InParanoid" id="P47379"/>
<dbReference type="OrthoDB" id="399161at2"/>
<dbReference type="BioCyc" id="MGEN243273:G1GJ2-147-MONOMER"/>
<dbReference type="Proteomes" id="UP000000807">
    <property type="component" value="Chromosome"/>
</dbReference>
<dbReference type="GO" id="GO:0005886">
    <property type="term" value="C:plasma membrane"/>
    <property type="evidence" value="ECO:0007669"/>
    <property type="project" value="UniProtKB-SubCell"/>
</dbReference>
<dbReference type="InterPro" id="IPR011631">
    <property type="entry name" value="DUF1600"/>
</dbReference>
<dbReference type="Pfam" id="PF07667">
    <property type="entry name" value="DUF1600"/>
    <property type="match status" value="1"/>
</dbReference>
<dbReference type="PIRSF" id="PIRSF006834">
    <property type="entry name" value="UCP006834"/>
    <property type="match status" value="1"/>
</dbReference>
<proteinExistence type="predicted"/>
<evidence type="ECO:0000255" key="1"/>
<evidence type="ECO:0000269" key="2">
    <source>
    </source>
</evidence>
<evidence type="ECO:0000305" key="3"/>
<comment type="subcellular location">
    <subcellularLocation>
        <location evidence="3">Cell membrane</location>
        <topology evidence="3">Multi-pass membrane protein</topology>
    </subcellularLocation>
</comment>
<comment type="disruption phenotype">
    <text evidence="2">Probably essential, it was not disrupted in a global transposon mutagenesis study.</text>
</comment>